<reference key="1">
    <citation type="submission" date="2006-06" db="EMBL/GenBank/DDBJ databases">
        <title>Complete sequence of chromosome of Mycobacterium sp. MCS.</title>
        <authorList>
            <consortium name="US DOE Joint Genome Institute"/>
            <person name="Copeland A."/>
            <person name="Lucas S."/>
            <person name="Lapidus A."/>
            <person name="Barry K."/>
            <person name="Detter J.C."/>
            <person name="Glavina del Rio T."/>
            <person name="Hammon N."/>
            <person name="Israni S."/>
            <person name="Dalin E."/>
            <person name="Tice H."/>
            <person name="Pitluck S."/>
            <person name="Martinez M."/>
            <person name="Schmutz J."/>
            <person name="Larimer F."/>
            <person name="Land M."/>
            <person name="Hauser L."/>
            <person name="Kyrpides N."/>
            <person name="Kim E."/>
            <person name="Miller C.D."/>
            <person name="Hughes J.E."/>
            <person name="Anderson A.J."/>
            <person name="Sims R.C."/>
            <person name="Richardson P."/>
        </authorList>
    </citation>
    <scope>NUCLEOTIDE SEQUENCE [LARGE SCALE GENOMIC DNA]</scope>
    <source>
        <strain>MCS</strain>
    </source>
</reference>
<name>PUR7_MYCSS</name>
<evidence type="ECO:0000255" key="1">
    <source>
        <dbReference type="HAMAP-Rule" id="MF_00137"/>
    </source>
</evidence>
<dbReference type="EC" id="6.3.2.6" evidence="1"/>
<dbReference type="EMBL" id="CP000384">
    <property type="protein sequence ID" value="ABG10664.1"/>
    <property type="molecule type" value="Genomic_DNA"/>
</dbReference>
<dbReference type="SMR" id="Q1B370"/>
<dbReference type="KEGG" id="mmc:Mmcs_4560"/>
<dbReference type="HOGENOM" id="CLU_045637_0_0_11"/>
<dbReference type="BioCyc" id="MSP164756:G1G6O-4661-MONOMER"/>
<dbReference type="UniPathway" id="UPA00074">
    <property type="reaction ID" value="UER00131"/>
</dbReference>
<dbReference type="GO" id="GO:0005737">
    <property type="term" value="C:cytoplasm"/>
    <property type="evidence" value="ECO:0007669"/>
    <property type="project" value="TreeGrafter"/>
</dbReference>
<dbReference type="GO" id="GO:0005524">
    <property type="term" value="F:ATP binding"/>
    <property type="evidence" value="ECO:0007669"/>
    <property type="project" value="UniProtKB-KW"/>
</dbReference>
<dbReference type="GO" id="GO:0004639">
    <property type="term" value="F:phosphoribosylaminoimidazolesuccinocarboxamide synthase activity"/>
    <property type="evidence" value="ECO:0007669"/>
    <property type="project" value="UniProtKB-UniRule"/>
</dbReference>
<dbReference type="GO" id="GO:0006189">
    <property type="term" value="P:'de novo' IMP biosynthetic process"/>
    <property type="evidence" value="ECO:0007669"/>
    <property type="project" value="UniProtKB-UniRule"/>
</dbReference>
<dbReference type="CDD" id="cd01414">
    <property type="entry name" value="SAICAR_synt_Sc"/>
    <property type="match status" value="1"/>
</dbReference>
<dbReference type="FunFam" id="3.30.200.20:FF:000199">
    <property type="entry name" value="Phosphoribosylaminoimidazole-succinocarboxamide synthase"/>
    <property type="match status" value="1"/>
</dbReference>
<dbReference type="FunFam" id="3.30.470.20:FF:000015">
    <property type="entry name" value="Phosphoribosylaminoimidazole-succinocarboxamide synthase"/>
    <property type="match status" value="1"/>
</dbReference>
<dbReference type="Gene3D" id="3.30.470.20">
    <property type="entry name" value="ATP-grasp fold, B domain"/>
    <property type="match status" value="1"/>
</dbReference>
<dbReference type="Gene3D" id="3.30.200.20">
    <property type="entry name" value="Phosphorylase Kinase, domain 1"/>
    <property type="match status" value="1"/>
</dbReference>
<dbReference type="HAMAP" id="MF_00137">
    <property type="entry name" value="SAICAR_synth"/>
    <property type="match status" value="1"/>
</dbReference>
<dbReference type="InterPro" id="IPR028923">
    <property type="entry name" value="SAICAR_synt/ADE2_N"/>
</dbReference>
<dbReference type="InterPro" id="IPR001636">
    <property type="entry name" value="SAICAR_synth"/>
</dbReference>
<dbReference type="InterPro" id="IPR018236">
    <property type="entry name" value="SAICAR_synthetase_CS"/>
</dbReference>
<dbReference type="NCBIfam" id="NF010568">
    <property type="entry name" value="PRK13961.1"/>
    <property type="match status" value="1"/>
</dbReference>
<dbReference type="NCBIfam" id="TIGR00081">
    <property type="entry name" value="purC"/>
    <property type="match status" value="1"/>
</dbReference>
<dbReference type="PANTHER" id="PTHR43700">
    <property type="entry name" value="PHOSPHORIBOSYLAMINOIMIDAZOLE-SUCCINOCARBOXAMIDE SYNTHASE"/>
    <property type="match status" value="1"/>
</dbReference>
<dbReference type="PANTHER" id="PTHR43700:SF1">
    <property type="entry name" value="PHOSPHORIBOSYLAMINOIMIDAZOLE-SUCCINOCARBOXAMIDE SYNTHASE"/>
    <property type="match status" value="1"/>
</dbReference>
<dbReference type="Pfam" id="PF01259">
    <property type="entry name" value="SAICAR_synt"/>
    <property type="match status" value="1"/>
</dbReference>
<dbReference type="SUPFAM" id="SSF56104">
    <property type="entry name" value="SAICAR synthase-like"/>
    <property type="match status" value="1"/>
</dbReference>
<dbReference type="PROSITE" id="PS01057">
    <property type="entry name" value="SAICAR_SYNTHETASE_1"/>
    <property type="match status" value="1"/>
</dbReference>
<dbReference type="PROSITE" id="PS01058">
    <property type="entry name" value="SAICAR_SYNTHETASE_2"/>
    <property type="match status" value="1"/>
</dbReference>
<accession>Q1B370</accession>
<feature type="chain" id="PRO_1000018738" description="Phosphoribosylaminoimidazole-succinocarboxamide synthase">
    <location>
        <begin position="1"/>
        <end position="297"/>
    </location>
</feature>
<protein>
    <recommendedName>
        <fullName evidence="1">Phosphoribosylaminoimidazole-succinocarboxamide synthase</fullName>
        <ecNumber evidence="1">6.3.2.6</ecNumber>
    </recommendedName>
    <alternativeName>
        <fullName evidence="1">SAICAR synthetase</fullName>
    </alternativeName>
</protein>
<organism>
    <name type="scientific">Mycobacterium sp. (strain MCS)</name>
    <dbReference type="NCBI Taxonomy" id="164756"/>
    <lineage>
        <taxon>Bacteria</taxon>
        <taxon>Bacillati</taxon>
        <taxon>Actinomycetota</taxon>
        <taxon>Actinomycetes</taxon>
        <taxon>Mycobacteriales</taxon>
        <taxon>Mycobacteriaceae</taxon>
        <taxon>Mycobacterium</taxon>
    </lineage>
</organism>
<keyword id="KW-0067">ATP-binding</keyword>
<keyword id="KW-0436">Ligase</keyword>
<keyword id="KW-0547">Nucleotide-binding</keyword>
<keyword id="KW-0658">Purine biosynthesis</keyword>
<comment type="catalytic activity">
    <reaction evidence="1">
        <text>5-amino-1-(5-phospho-D-ribosyl)imidazole-4-carboxylate + L-aspartate + ATP = (2S)-2-[5-amino-1-(5-phospho-beta-D-ribosyl)imidazole-4-carboxamido]succinate + ADP + phosphate + 2 H(+)</text>
        <dbReference type="Rhea" id="RHEA:22628"/>
        <dbReference type="ChEBI" id="CHEBI:15378"/>
        <dbReference type="ChEBI" id="CHEBI:29991"/>
        <dbReference type="ChEBI" id="CHEBI:30616"/>
        <dbReference type="ChEBI" id="CHEBI:43474"/>
        <dbReference type="ChEBI" id="CHEBI:58443"/>
        <dbReference type="ChEBI" id="CHEBI:77657"/>
        <dbReference type="ChEBI" id="CHEBI:456216"/>
        <dbReference type="EC" id="6.3.2.6"/>
    </reaction>
</comment>
<comment type="pathway">
    <text evidence="1">Purine metabolism; IMP biosynthesis via de novo pathway; 5-amino-1-(5-phospho-D-ribosyl)imidazole-4-carboxamide from 5-amino-1-(5-phospho-D-ribosyl)imidazole-4-carboxylate: step 1/2.</text>
</comment>
<comment type="similarity">
    <text evidence="1">Belongs to the SAICAR synthetase family.</text>
</comment>
<gene>
    <name evidence="1" type="primary">purC</name>
    <name type="ordered locus">Mmcs_4560</name>
</gene>
<proteinExistence type="inferred from homology"/>
<sequence length="297" mass="32973">MRPALSDYRHLASGKVRELYRIDDEHLLFVATDRISAYDHILSSEIPDKGRILTAMSVFFFDLIDAPNHLAGPPDDPRIPEEVLGRALVVRQLEMLPVECVARGYLTGSGLIDYRKTGTLCGLTLPPGLTEASKFAEPLYTPASKAELGLHDENIDFAATVDLVGEKRAAQLRERTLQIYTQGADHALTKGIIIADTKFEFGVDPSGELVLADEVFTPDSSRYWYADAYREGQVQPSYDKQFVRNWLTGPESGWDRAADQPPPPLPAEIVDATRSRYIEAYERISGLSFAEWIGASA</sequence>